<reference key="1">
    <citation type="journal article" date="2005" name="Proc. Natl. Acad. Sci. U.S.A.">
        <title>Complete genome sequence of Vibrio fischeri: a symbiotic bacterium with pathogenic congeners.</title>
        <authorList>
            <person name="Ruby E.G."/>
            <person name="Urbanowski M."/>
            <person name="Campbell J."/>
            <person name="Dunn A."/>
            <person name="Faini M."/>
            <person name="Gunsalus R."/>
            <person name="Lostroh P."/>
            <person name="Lupp C."/>
            <person name="McCann J."/>
            <person name="Millikan D."/>
            <person name="Schaefer A."/>
            <person name="Stabb E."/>
            <person name="Stevens A."/>
            <person name="Visick K."/>
            <person name="Whistler C."/>
            <person name="Greenberg E.P."/>
        </authorList>
    </citation>
    <scope>NUCLEOTIDE SEQUENCE [LARGE SCALE GENOMIC DNA]</scope>
    <source>
        <strain>ATCC 700601 / ES114</strain>
    </source>
</reference>
<dbReference type="EC" id="3.1.11.6" evidence="1"/>
<dbReference type="EMBL" id="CP000020">
    <property type="protein sequence ID" value="AAW85131.1"/>
    <property type="molecule type" value="Genomic_DNA"/>
</dbReference>
<dbReference type="RefSeq" id="WP_011261371.1">
    <property type="nucleotide sequence ID" value="NC_006840.2"/>
</dbReference>
<dbReference type="RefSeq" id="YP_204019.1">
    <property type="nucleotide sequence ID" value="NC_006840.2"/>
</dbReference>
<dbReference type="SMR" id="Q5E765"/>
<dbReference type="STRING" id="312309.VF_0636"/>
<dbReference type="EnsemblBacteria" id="AAW85131">
    <property type="protein sequence ID" value="AAW85131"/>
    <property type="gene ID" value="VF_0636"/>
</dbReference>
<dbReference type="GeneID" id="54163289"/>
<dbReference type="KEGG" id="vfi:VF_0636"/>
<dbReference type="PATRIC" id="fig|312309.11.peg.628"/>
<dbReference type="eggNOG" id="COG1570">
    <property type="taxonomic scope" value="Bacteria"/>
</dbReference>
<dbReference type="HOGENOM" id="CLU_023625_3_1_6"/>
<dbReference type="OrthoDB" id="9802795at2"/>
<dbReference type="Proteomes" id="UP000000537">
    <property type="component" value="Chromosome I"/>
</dbReference>
<dbReference type="GO" id="GO:0005737">
    <property type="term" value="C:cytoplasm"/>
    <property type="evidence" value="ECO:0007669"/>
    <property type="project" value="UniProtKB-SubCell"/>
</dbReference>
<dbReference type="GO" id="GO:0009318">
    <property type="term" value="C:exodeoxyribonuclease VII complex"/>
    <property type="evidence" value="ECO:0007669"/>
    <property type="project" value="InterPro"/>
</dbReference>
<dbReference type="GO" id="GO:0008855">
    <property type="term" value="F:exodeoxyribonuclease VII activity"/>
    <property type="evidence" value="ECO:0007669"/>
    <property type="project" value="UniProtKB-UniRule"/>
</dbReference>
<dbReference type="GO" id="GO:0003676">
    <property type="term" value="F:nucleic acid binding"/>
    <property type="evidence" value="ECO:0007669"/>
    <property type="project" value="InterPro"/>
</dbReference>
<dbReference type="GO" id="GO:0006308">
    <property type="term" value="P:DNA catabolic process"/>
    <property type="evidence" value="ECO:0007669"/>
    <property type="project" value="UniProtKB-UniRule"/>
</dbReference>
<dbReference type="CDD" id="cd04489">
    <property type="entry name" value="ExoVII_LU_OBF"/>
    <property type="match status" value="1"/>
</dbReference>
<dbReference type="HAMAP" id="MF_00378">
    <property type="entry name" value="Exonuc_7_L"/>
    <property type="match status" value="1"/>
</dbReference>
<dbReference type="InterPro" id="IPR003753">
    <property type="entry name" value="Exonuc_VII_L"/>
</dbReference>
<dbReference type="InterPro" id="IPR020579">
    <property type="entry name" value="Exonuc_VII_lsu_C"/>
</dbReference>
<dbReference type="InterPro" id="IPR025824">
    <property type="entry name" value="OB-fold_nuc-bd_dom"/>
</dbReference>
<dbReference type="NCBIfam" id="TIGR00237">
    <property type="entry name" value="xseA"/>
    <property type="match status" value="1"/>
</dbReference>
<dbReference type="PANTHER" id="PTHR30008">
    <property type="entry name" value="EXODEOXYRIBONUCLEASE 7 LARGE SUBUNIT"/>
    <property type="match status" value="1"/>
</dbReference>
<dbReference type="PANTHER" id="PTHR30008:SF0">
    <property type="entry name" value="EXODEOXYRIBONUCLEASE 7 LARGE SUBUNIT"/>
    <property type="match status" value="1"/>
</dbReference>
<dbReference type="Pfam" id="PF02601">
    <property type="entry name" value="Exonuc_VII_L"/>
    <property type="match status" value="1"/>
</dbReference>
<dbReference type="Pfam" id="PF13742">
    <property type="entry name" value="tRNA_anti_2"/>
    <property type="match status" value="1"/>
</dbReference>
<feature type="chain" id="PRO_0000273700" description="Exodeoxyribonuclease 7 large subunit">
    <location>
        <begin position="1"/>
        <end position="449"/>
    </location>
</feature>
<comment type="function">
    <text evidence="1">Bidirectionally degrades single-stranded DNA into large acid-insoluble oligonucleotides, which are then degraded further into small acid-soluble oligonucleotides.</text>
</comment>
<comment type="catalytic activity">
    <reaction evidence="1">
        <text>Exonucleolytic cleavage in either 5'- to 3'- or 3'- to 5'-direction to yield nucleoside 5'-phosphates.</text>
        <dbReference type="EC" id="3.1.11.6"/>
    </reaction>
</comment>
<comment type="subunit">
    <text evidence="1">Heterooligomer composed of large and small subunits.</text>
</comment>
<comment type="subcellular location">
    <subcellularLocation>
        <location evidence="1">Cytoplasm</location>
    </subcellularLocation>
</comment>
<comment type="similarity">
    <text evidence="1">Belongs to the XseA family.</text>
</comment>
<proteinExistence type="inferred from homology"/>
<gene>
    <name evidence="1" type="primary">xseA</name>
    <name type="ordered locus">VF_0636</name>
</gene>
<evidence type="ECO:0000255" key="1">
    <source>
        <dbReference type="HAMAP-Rule" id="MF_00378"/>
    </source>
</evidence>
<organism>
    <name type="scientific">Aliivibrio fischeri (strain ATCC 700601 / ES114)</name>
    <name type="common">Vibrio fischeri</name>
    <dbReference type="NCBI Taxonomy" id="312309"/>
    <lineage>
        <taxon>Bacteria</taxon>
        <taxon>Pseudomonadati</taxon>
        <taxon>Pseudomonadota</taxon>
        <taxon>Gammaproteobacteria</taxon>
        <taxon>Vibrionales</taxon>
        <taxon>Vibrionaceae</taxon>
        <taxon>Aliivibrio</taxon>
    </lineage>
</organism>
<keyword id="KW-0963">Cytoplasm</keyword>
<keyword id="KW-0269">Exonuclease</keyword>
<keyword id="KW-0378">Hydrolase</keyword>
<keyword id="KW-0540">Nuclease</keyword>
<keyword id="KW-1185">Reference proteome</keyword>
<accession>Q5E765</accession>
<protein>
    <recommendedName>
        <fullName evidence="1">Exodeoxyribonuclease 7 large subunit</fullName>
        <ecNumber evidence="1">3.1.11.6</ecNumber>
    </recommendedName>
    <alternativeName>
        <fullName evidence="1">Exodeoxyribonuclease VII large subunit</fullName>
        <shortName evidence="1">Exonuclease VII large subunit</shortName>
    </alternativeName>
</protein>
<name>EX7L_ALIF1</name>
<sequence length="449" mass="50518">MSLDSNPRIFTVSRLNAEVRLLLENEMGIVWLVGEISNLTVPVSGHWYLTLKDSQAQVKCAMFKGNNRRVNFKPQNGKQVLVKARLSLYEPRGDYQLIIESMQPEGDGRLQQEFDQLKMSLAAEGLFAQTAKKSLPEQPKRVGIITSQTGAALFDILHVLKRRDPNLPIVIYPTMVQGSGAAIQIAQAIGRANSRNECDILIVGRGGGSLEDLWCFNEEIVARTIAASEIPIVSAVGHEIDVTIADFVADVRAPTPSAAAELVSRDLSAQLQTVAHQKRRLNSAMERYLSHQQRSLSAYQHRIEKQHPQMQLNNQSQRLDDLNQRLMNHIQQRLQRQQYRVENLTLRLNNLSPTKRISQDKLHIEELKRRLLDSMDRNLLMQRHQLALAAEKLDTVSPLATLMRGYSITHNQDGKIITSTKQVELGDNITTRFADGDITSTVTKASELN</sequence>